<feature type="chain" id="PRO_1000054574" description="Large ribosomal subunit protein uL16">
    <location>
        <begin position="1"/>
        <end position="137"/>
    </location>
</feature>
<dbReference type="EMBL" id="CP000453">
    <property type="protein sequence ID" value="ABI55819.1"/>
    <property type="molecule type" value="Genomic_DNA"/>
</dbReference>
<dbReference type="RefSeq" id="WP_011628214.1">
    <property type="nucleotide sequence ID" value="NC_008340.1"/>
</dbReference>
<dbReference type="SMR" id="Q0ABG8"/>
<dbReference type="KEGG" id="aeh:Mlg_0465"/>
<dbReference type="eggNOG" id="COG0197">
    <property type="taxonomic scope" value="Bacteria"/>
</dbReference>
<dbReference type="HOGENOM" id="CLU_078858_2_1_6"/>
<dbReference type="OrthoDB" id="9802589at2"/>
<dbReference type="Proteomes" id="UP000001962">
    <property type="component" value="Chromosome"/>
</dbReference>
<dbReference type="GO" id="GO:0022625">
    <property type="term" value="C:cytosolic large ribosomal subunit"/>
    <property type="evidence" value="ECO:0007669"/>
    <property type="project" value="TreeGrafter"/>
</dbReference>
<dbReference type="GO" id="GO:0019843">
    <property type="term" value="F:rRNA binding"/>
    <property type="evidence" value="ECO:0007669"/>
    <property type="project" value="UniProtKB-UniRule"/>
</dbReference>
<dbReference type="GO" id="GO:0003735">
    <property type="term" value="F:structural constituent of ribosome"/>
    <property type="evidence" value="ECO:0007669"/>
    <property type="project" value="InterPro"/>
</dbReference>
<dbReference type="GO" id="GO:0000049">
    <property type="term" value="F:tRNA binding"/>
    <property type="evidence" value="ECO:0007669"/>
    <property type="project" value="UniProtKB-KW"/>
</dbReference>
<dbReference type="GO" id="GO:0006412">
    <property type="term" value="P:translation"/>
    <property type="evidence" value="ECO:0007669"/>
    <property type="project" value="UniProtKB-UniRule"/>
</dbReference>
<dbReference type="CDD" id="cd01433">
    <property type="entry name" value="Ribosomal_L16_L10e"/>
    <property type="match status" value="1"/>
</dbReference>
<dbReference type="FunFam" id="3.90.1170.10:FF:000001">
    <property type="entry name" value="50S ribosomal protein L16"/>
    <property type="match status" value="1"/>
</dbReference>
<dbReference type="Gene3D" id="3.90.1170.10">
    <property type="entry name" value="Ribosomal protein L10e/L16"/>
    <property type="match status" value="1"/>
</dbReference>
<dbReference type="HAMAP" id="MF_01342">
    <property type="entry name" value="Ribosomal_uL16"/>
    <property type="match status" value="1"/>
</dbReference>
<dbReference type="InterPro" id="IPR047873">
    <property type="entry name" value="Ribosomal_uL16"/>
</dbReference>
<dbReference type="InterPro" id="IPR000114">
    <property type="entry name" value="Ribosomal_uL16_bact-type"/>
</dbReference>
<dbReference type="InterPro" id="IPR020798">
    <property type="entry name" value="Ribosomal_uL16_CS"/>
</dbReference>
<dbReference type="InterPro" id="IPR016180">
    <property type="entry name" value="Ribosomal_uL16_dom"/>
</dbReference>
<dbReference type="InterPro" id="IPR036920">
    <property type="entry name" value="Ribosomal_uL16_sf"/>
</dbReference>
<dbReference type="NCBIfam" id="TIGR01164">
    <property type="entry name" value="rplP_bact"/>
    <property type="match status" value="1"/>
</dbReference>
<dbReference type="PANTHER" id="PTHR12220">
    <property type="entry name" value="50S/60S RIBOSOMAL PROTEIN L16"/>
    <property type="match status" value="1"/>
</dbReference>
<dbReference type="PANTHER" id="PTHR12220:SF13">
    <property type="entry name" value="LARGE RIBOSOMAL SUBUNIT PROTEIN UL16M"/>
    <property type="match status" value="1"/>
</dbReference>
<dbReference type="Pfam" id="PF00252">
    <property type="entry name" value="Ribosomal_L16"/>
    <property type="match status" value="1"/>
</dbReference>
<dbReference type="PRINTS" id="PR00060">
    <property type="entry name" value="RIBOSOMALL16"/>
</dbReference>
<dbReference type="SUPFAM" id="SSF54686">
    <property type="entry name" value="Ribosomal protein L16p/L10e"/>
    <property type="match status" value="1"/>
</dbReference>
<dbReference type="PROSITE" id="PS00586">
    <property type="entry name" value="RIBOSOMAL_L16_1"/>
    <property type="match status" value="1"/>
</dbReference>
<sequence length="137" mass="15476">MLQPKRTKFRKQQKGRNYGLASRGNAVSFGEYGLKAVTRGPITARQIEAGRRAINRHVKRGGKVWIRVFPDKPITAKPLEVRQGKGKGNVDHWAFPVQPGRVLYEIEGVSEELAREAFRRAAAKLPVRTTFVQRTVL</sequence>
<proteinExistence type="inferred from homology"/>
<organism>
    <name type="scientific">Alkalilimnicola ehrlichii (strain ATCC BAA-1101 / DSM 17681 / MLHE-1)</name>
    <dbReference type="NCBI Taxonomy" id="187272"/>
    <lineage>
        <taxon>Bacteria</taxon>
        <taxon>Pseudomonadati</taxon>
        <taxon>Pseudomonadota</taxon>
        <taxon>Gammaproteobacteria</taxon>
        <taxon>Chromatiales</taxon>
        <taxon>Ectothiorhodospiraceae</taxon>
        <taxon>Alkalilimnicola</taxon>
    </lineage>
</organism>
<name>RL16_ALKEH</name>
<protein>
    <recommendedName>
        <fullName evidence="1">Large ribosomal subunit protein uL16</fullName>
    </recommendedName>
    <alternativeName>
        <fullName evidence="2">50S ribosomal protein L16</fullName>
    </alternativeName>
</protein>
<keyword id="KW-1185">Reference proteome</keyword>
<keyword id="KW-0687">Ribonucleoprotein</keyword>
<keyword id="KW-0689">Ribosomal protein</keyword>
<keyword id="KW-0694">RNA-binding</keyword>
<keyword id="KW-0699">rRNA-binding</keyword>
<keyword id="KW-0820">tRNA-binding</keyword>
<reference key="1">
    <citation type="submission" date="2006-08" db="EMBL/GenBank/DDBJ databases">
        <title>Complete sequence of Alkalilimnicola ehrilichei MLHE-1.</title>
        <authorList>
            <person name="Copeland A."/>
            <person name="Lucas S."/>
            <person name="Lapidus A."/>
            <person name="Barry K."/>
            <person name="Detter J.C."/>
            <person name="Glavina del Rio T."/>
            <person name="Hammon N."/>
            <person name="Israni S."/>
            <person name="Dalin E."/>
            <person name="Tice H."/>
            <person name="Pitluck S."/>
            <person name="Sims D."/>
            <person name="Brettin T."/>
            <person name="Bruce D."/>
            <person name="Han C."/>
            <person name="Tapia R."/>
            <person name="Gilna P."/>
            <person name="Schmutz J."/>
            <person name="Larimer F."/>
            <person name="Land M."/>
            <person name="Hauser L."/>
            <person name="Kyrpides N."/>
            <person name="Mikhailova N."/>
            <person name="Oremland R.S."/>
            <person name="Hoeft S.E."/>
            <person name="Switzer-Blum J."/>
            <person name="Kulp T."/>
            <person name="King G."/>
            <person name="Tabita R."/>
            <person name="Witte B."/>
            <person name="Santini J.M."/>
            <person name="Basu P."/>
            <person name="Hollibaugh J.T."/>
            <person name="Xie G."/>
            <person name="Stolz J.F."/>
            <person name="Richardson P."/>
        </authorList>
    </citation>
    <scope>NUCLEOTIDE SEQUENCE [LARGE SCALE GENOMIC DNA]</scope>
    <source>
        <strain>ATCC BAA-1101 / DSM 17681 / MLHE-1</strain>
    </source>
</reference>
<evidence type="ECO:0000255" key="1">
    <source>
        <dbReference type="HAMAP-Rule" id="MF_01342"/>
    </source>
</evidence>
<evidence type="ECO:0000305" key="2"/>
<comment type="function">
    <text evidence="1">Binds 23S rRNA and is also seen to make contacts with the A and possibly P site tRNAs.</text>
</comment>
<comment type="subunit">
    <text evidence="1">Part of the 50S ribosomal subunit.</text>
</comment>
<comment type="similarity">
    <text evidence="1">Belongs to the universal ribosomal protein uL16 family.</text>
</comment>
<gene>
    <name evidence="1" type="primary">rplP</name>
    <name type="ordered locus">Mlg_0465</name>
</gene>
<accession>Q0ABG8</accession>